<name>CP2AX_BOVIN</name>
<reference key="1">
    <citation type="journal article" date="1990" name="Biochemistry">
        <title>Identification and biochemical analysis of novel olfactory-specific cytochrome P-450IIA and UDP-glucuronosyl transferase.</title>
        <authorList>
            <person name="Lazard D."/>
            <person name="Tal N."/>
            <person name="Rubinstein M."/>
            <person name="Khen M."/>
            <person name="Lancet D."/>
            <person name="Zupko K."/>
        </authorList>
    </citation>
    <scope>PROTEIN SEQUENCE</scope>
</reference>
<dbReference type="EC" id="1.14.14.1"/>
<dbReference type="PIR" id="A35704">
    <property type="entry name" value="A35704"/>
</dbReference>
<dbReference type="STRING" id="9913.ENSBTAP00000054604"/>
<dbReference type="PaxDb" id="9913-ENSBTAP00000054604"/>
<dbReference type="eggNOG" id="KOG0156">
    <property type="taxonomic scope" value="Eukaryota"/>
</dbReference>
<dbReference type="InParanoid" id="P22779"/>
<dbReference type="Proteomes" id="UP000009136">
    <property type="component" value="Unplaced"/>
</dbReference>
<dbReference type="GO" id="GO:0005789">
    <property type="term" value="C:endoplasmic reticulum membrane"/>
    <property type="evidence" value="ECO:0007669"/>
    <property type="project" value="UniProtKB-SubCell"/>
</dbReference>
<dbReference type="GO" id="GO:0046872">
    <property type="term" value="F:metal ion binding"/>
    <property type="evidence" value="ECO:0007669"/>
    <property type="project" value="UniProtKB-KW"/>
</dbReference>
<dbReference type="GO" id="GO:0016712">
    <property type="term" value="F:oxidoreductase activity, acting on paired donors, with incorporation or reduction of molecular oxygen, reduced flavin or flavoprotein as one donor, and incorporation of one atom of oxygen"/>
    <property type="evidence" value="ECO:0007669"/>
    <property type="project" value="UniProtKB-EC"/>
</dbReference>
<dbReference type="GO" id="GO:0007608">
    <property type="term" value="P:sensory perception of smell"/>
    <property type="evidence" value="ECO:0007669"/>
    <property type="project" value="UniProtKB-KW"/>
</dbReference>
<accession>P22779</accession>
<evidence type="ECO:0000250" key="1"/>
<evidence type="ECO:0000305" key="2"/>
<sequence>MXYLPGPQQQAFKELQGL</sequence>
<comment type="function">
    <text>Cytochromes P450 are a group of heme-thiolate monooxygenases. In liver microsomes, this enzyme is involved in an NADPH-dependent electron transport pathway. It oxidizes a variety of structurally unrelated compounds, including steroids, fatty acids, and xenobiotics.</text>
</comment>
<comment type="catalytic activity">
    <reaction>
        <text>an organic molecule + reduced [NADPH--hemoprotein reductase] + O2 = an alcohol + oxidized [NADPH--hemoprotein reductase] + H2O + H(+)</text>
        <dbReference type="Rhea" id="RHEA:17149"/>
        <dbReference type="Rhea" id="RHEA-COMP:11964"/>
        <dbReference type="Rhea" id="RHEA-COMP:11965"/>
        <dbReference type="ChEBI" id="CHEBI:15377"/>
        <dbReference type="ChEBI" id="CHEBI:15378"/>
        <dbReference type="ChEBI" id="CHEBI:15379"/>
        <dbReference type="ChEBI" id="CHEBI:30879"/>
        <dbReference type="ChEBI" id="CHEBI:57618"/>
        <dbReference type="ChEBI" id="CHEBI:58210"/>
        <dbReference type="ChEBI" id="CHEBI:142491"/>
        <dbReference type="EC" id="1.14.14.1"/>
    </reaction>
</comment>
<comment type="cofactor">
    <cofactor evidence="1">
        <name>heme</name>
        <dbReference type="ChEBI" id="CHEBI:30413"/>
    </cofactor>
</comment>
<comment type="subcellular location">
    <subcellularLocation>
        <location>Endoplasmic reticulum membrane</location>
        <topology>Peripheral membrane protein</topology>
    </subcellularLocation>
    <subcellularLocation>
        <location>Microsome membrane</location>
        <topology>Peripheral membrane protein</topology>
    </subcellularLocation>
</comment>
<comment type="similarity">
    <text evidence="2">Belongs to the cytochrome P450 family.</text>
</comment>
<feature type="chain" id="PRO_0000051677" description="Cytochrome P450 2A">
    <location>
        <begin position="1" status="less than"/>
        <end position="18" status="greater than"/>
    </location>
</feature>
<feature type="sequence variant">
    <original>G</original>
    <variation>D</variation>
    <location>
        <position position="6"/>
    </location>
</feature>
<feature type="sequence variant">
    <original>A</original>
    <variation>E</variation>
    <location>
        <position position="11"/>
    </location>
</feature>
<feature type="non-terminal residue">
    <location>
        <position position="1"/>
    </location>
</feature>
<feature type="non-terminal residue">
    <location>
        <position position="18"/>
    </location>
</feature>
<protein>
    <recommendedName>
        <fullName>Cytochrome P450 2A</fullName>
        <ecNumber>1.14.14.1</ecNumber>
    </recommendedName>
    <alternativeName>
        <fullName>Cytochrome OLF2</fullName>
    </alternativeName>
    <alternativeName>
        <fullName>Olfactive cytochrome P450</fullName>
    </alternativeName>
    <alternativeName>
        <fullName>P52</fullName>
    </alternativeName>
</protein>
<keyword id="KW-0903">Direct protein sequencing</keyword>
<keyword id="KW-0256">Endoplasmic reticulum</keyword>
<keyword id="KW-0349">Heme</keyword>
<keyword id="KW-0408">Iron</keyword>
<keyword id="KW-0472">Membrane</keyword>
<keyword id="KW-0479">Metal-binding</keyword>
<keyword id="KW-0492">Microsome</keyword>
<keyword id="KW-0503">Monooxygenase</keyword>
<keyword id="KW-0552">Olfaction</keyword>
<keyword id="KW-0560">Oxidoreductase</keyword>
<keyword id="KW-1185">Reference proteome</keyword>
<keyword id="KW-0716">Sensory transduction</keyword>
<proteinExistence type="evidence at protein level"/>
<organism>
    <name type="scientific">Bos taurus</name>
    <name type="common">Bovine</name>
    <dbReference type="NCBI Taxonomy" id="9913"/>
    <lineage>
        <taxon>Eukaryota</taxon>
        <taxon>Metazoa</taxon>
        <taxon>Chordata</taxon>
        <taxon>Craniata</taxon>
        <taxon>Vertebrata</taxon>
        <taxon>Euteleostomi</taxon>
        <taxon>Mammalia</taxon>
        <taxon>Eutheria</taxon>
        <taxon>Laurasiatheria</taxon>
        <taxon>Artiodactyla</taxon>
        <taxon>Ruminantia</taxon>
        <taxon>Pecora</taxon>
        <taxon>Bovidae</taxon>
        <taxon>Bovinae</taxon>
        <taxon>Bos</taxon>
    </lineage>
</organism>